<feature type="initiator methionine" description="Removed" evidence="1">
    <location>
        <position position="1"/>
    </location>
</feature>
<feature type="chain" id="PRO_0000460052" description="Small ribosomal subunit protein uS3">
    <location>
        <begin position="2"/>
        <end position="243"/>
    </location>
</feature>
<feature type="domain" description="KH type-2" evidence="3">
    <location>
        <begin position="21"/>
        <end position="92"/>
    </location>
</feature>
<feature type="region of interest" description="Disordered" evidence="4">
    <location>
        <begin position="200"/>
        <end position="243"/>
    </location>
</feature>
<feature type="compositionally biased region" description="Pro residues" evidence="4">
    <location>
        <begin position="231"/>
        <end position="243"/>
    </location>
</feature>
<feature type="modified residue" description="N-acetylalanine" evidence="1">
    <location>
        <position position="2"/>
    </location>
</feature>
<feature type="modified residue" description="Phosphoserine" evidence="1">
    <location>
        <position position="6"/>
    </location>
</feature>
<feature type="modified residue" description="Phosphoserine" evidence="1">
    <location>
        <position position="35"/>
    </location>
</feature>
<feature type="modified residue" description="Phosphothreonine" evidence="1">
    <location>
        <position position="42"/>
    </location>
</feature>
<feature type="modified residue" description="N6-acetyllysine" evidence="1">
    <location>
        <position position="62"/>
    </location>
</feature>
<feature type="modified residue" description="Asymmetric dimethylarginine" evidence="1">
    <location>
        <position position="64"/>
    </location>
</feature>
<feature type="modified residue" description="Asymmetric dimethylarginine" evidence="1">
    <location>
        <position position="65"/>
    </location>
</feature>
<feature type="modified residue" description="Asymmetric dimethylarginine" evidence="1">
    <location>
        <position position="67"/>
    </location>
</feature>
<feature type="modified residue" description="Phosphothreonine" evidence="1">
    <location>
        <position position="70"/>
    </location>
</feature>
<feature type="modified residue" description="Phosphoserine" evidence="1">
    <location>
        <position position="104"/>
    </location>
</feature>
<feature type="modified residue" description="N6-succinyllysine" evidence="2">
    <location>
        <position position="132"/>
    </location>
</feature>
<feature type="modified residue" description="Phosphoserine" evidence="1">
    <location>
        <position position="209"/>
    </location>
</feature>
<feature type="modified residue" description="Phosphothreonine" evidence="1">
    <location>
        <position position="220"/>
    </location>
</feature>
<feature type="modified residue" description="Phosphothreonine" evidence="1">
    <location>
        <position position="221"/>
    </location>
</feature>
<feature type="modified residue" description="Phosphoserine" evidence="1">
    <location>
        <position position="224"/>
    </location>
</feature>
<feature type="modified residue" description="Phosphothreonine" evidence="1">
    <location>
        <position position="242"/>
    </location>
</feature>
<feature type="cross-link" description="Glycyl lysine isopeptide (Lys-Gly) (interchain with G-Cter in ubiquitin)" evidence="1">
    <location>
        <position position="90"/>
    </location>
</feature>
<feature type="cross-link" description="Glycyl lysine isopeptide (Lys-Gly) (interchain with G-Cter in ubiquitin)" evidence="1">
    <location>
        <position position="202"/>
    </location>
</feature>
<feature type="cross-link" description="Glycyl lysine isopeptide (Lys-Gly) (interchain with G-Cter in SUMO2); alternate" evidence="1">
    <location>
        <position position="214"/>
    </location>
</feature>
<feature type="cross-link" description="Glycyl lysine isopeptide (Lys-Gly) (interchain with G-Cter in ubiquitin); alternate" evidence="1">
    <location>
        <position position="214"/>
    </location>
</feature>
<feature type="cross-link" description="Glycyl lysine isopeptide (Lys-Gly) (interchain with G-Cter in SUMO2)" evidence="1">
    <location>
        <position position="230"/>
    </location>
</feature>
<feature type="helix" evidence="50">
    <location>
        <begin position="7"/>
        <end position="11"/>
    </location>
</feature>
<feature type="helix" evidence="50">
    <location>
        <begin position="13"/>
        <end position="28"/>
    </location>
</feature>
<feature type="turn" evidence="50">
    <location>
        <begin position="29"/>
        <end position="33"/>
    </location>
</feature>
<feature type="strand" evidence="50">
    <location>
        <begin position="39"/>
        <end position="42"/>
    </location>
</feature>
<feature type="strand" evidence="50">
    <location>
        <begin position="45"/>
        <end position="48"/>
    </location>
</feature>
<feature type="strand" evidence="50">
    <location>
        <begin position="50"/>
        <end position="53"/>
    </location>
</feature>
<feature type="helix" evidence="50">
    <location>
        <begin position="55"/>
        <end position="58"/>
    </location>
</feature>
<feature type="strand" evidence="50">
    <location>
        <begin position="61"/>
        <end position="64"/>
    </location>
</feature>
<feature type="helix" evidence="50">
    <location>
        <begin position="65"/>
        <end position="76"/>
    </location>
</feature>
<feature type="strand" evidence="50">
    <location>
        <begin position="83"/>
        <end position="85"/>
    </location>
</feature>
<feature type="strand" evidence="50">
    <location>
        <begin position="88"/>
        <end position="90"/>
    </location>
</feature>
<feature type="helix" evidence="50">
    <location>
        <begin position="94"/>
        <end position="96"/>
    </location>
</feature>
<feature type="helix" evidence="50">
    <location>
        <begin position="98"/>
        <end position="111"/>
    </location>
</feature>
<feature type="helix" evidence="50">
    <location>
        <begin position="115"/>
        <end position="128"/>
    </location>
</feature>
<feature type="strand" evidence="50">
    <location>
        <begin position="132"/>
        <end position="141"/>
    </location>
</feature>
<feature type="strand" evidence="50">
    <location>
        <begin position="143"/>
        <end position="149"/>
    </location>
</feature>
<feature type="strand" evidence="50">
    <location>
        <begin position="152"/>
        <end position="155"/>
    </location>
</feature>
<feature type="strand" evidence="50">
    <location>
        <begin position="160"/>
        <end position="162"/>
    </location>
</feature>
<feature type="helix" evidence="50">
    <location>
        <begin position="164"/>
        <end position="167"/>
    </location>
</feature>
<feature type="strand" evidence="50">
    <location>
        <begin position="168"/>
        <end position="176"/>
    </location>
</feature>
<feature type="strand" evidence="50">
    <location>
        <begin position="181"/>
        <end position="189"/>
    </location>
</feature>
<feature type="strand" evidence="50">
    <location>
        <begin position="197"/>
        <end position="199"/>
    </location>
</feature>
<feature type="strand" evidence="49">
    <location>
        <begin position="205"/>
        <end position="207"/>
    </location>
</feature>
<feature type="strand" evidence="49">
    <location>
        <begin position="223"/>
        <end position="226"/>
    </location>
</feature>
<gene>
    <name type="primary">RPS3</name>
</gene>
<name>RS3_RABIT</name>
<proteinExistence type="evidence at protein level"/>
<accession>G1TNM3</accession>
<keyword id="KW-0002">3D-structure</keyword>
<keyword id="KW-0007">Acetylation</keyword>
<keyword id="KW-0053">Apoptosis</keyword>
<keyword id="KW-0131">Cell cycle</keyword>
<keyword id="KW-0132">Cell division</keyword>
<keyword id="KW-0963">Cytoplasm</keyword>
<keyword id="KW-0206">Cytoskeleton</keyword>
<keyword id="KW-0227">DNA damage</keyword>
<keyword id="KW-0234">DNA repair</keyword>
<keyword id="KW-0238">DNA-binding</keyword>
<keyword id="KW-1017">Isopeptide bond</keyword>
<keyword id="KW-0456">Lyase</keyword>
<keyword id="KW-0472">Membrane</keyword>
<keyword id="KW-0488">Methylation</keyword>
<keyword id="KW-0496">Mitochondrion</keyword>
<keyword id="KW-0999">Mitochondrion inner membrane</keyword>
<keyword id="KW-0498">Mitosis</keyword>
<keyword id="KW-0539">Nucleus</keyword>
<keyword id="KW-0597">Phosphoprotein</keyword>
<keyword id="KW-1185">Reference proteome</keyword>
<keyword id="KW-0687">Ribonucleoprotein</keyword>
<keyword id="KW-0689">Ribosomal protein</keyword>
<keyword id="KW-0694">RNA-binding</keyword>
<keyword id="KW-0804">Transcription</keyword>
<keyword id="KW-0805">Transcription regulation</keyword>
<keyword id="KW-0810">Translation regulation</keyword>
<keyword id="KW-0832">Ubl conjugation</keyword>
<protein>
    <recommendedName>
        <fullName>Small ribosomal subunit protein uS3</fullName>
    </recommendedName>
    <alternativeName>
        <fullName>40S ribosomal protein S3</fullName>
        <ecNumber evidence="1">4.2.99.18</ecNumber>
    </alternativeName>
</protein>
<comment type="function">
    <text evidence="1 5 6 7 8">Component of the small ribosomal subunit (PubMed:23873042, PubMed:25601755, PubMed:26245381, PubMed:27863242). The ribosome is a large ribonucleoprotein complex responsible for the synthesis of proteins in the cell (PubMed:23873042, PubMed:25601755, PubMed:26245381, PubMed:27863242). Has endonuclease activity and plays a role in repair of damaged DNA (By similarity). Cleaves phosphodiester bonds of DNAs containing altered bases with broad specificity and cleaves supercoiled DNA more efficiently than relaxed DNA (By similarity). Displays high binding affinity for 7,8-dihydro-8-oxoguanine (8-oxoG), a common DNA lesion caused by reactive oxygen species (ROS) (By similarity). Has also been shown to bind with similar affinity to intact and damaged DNA (By similarity). Stimulates the N-glycosylase activity of the base excision protein OGG1 (By similarity). Enhances the uracil excision activity of UNG1 (By similarity). Also stimulates the cleavage of the phosphodiester backbone by APEX1 (By similarity). When located in the mitochondrion, reduces cellular ROS levels and mitochondrial DNA damage (By similarity). Has also been shown to negatively regulate DNA repair in cells exposed to hydrogen peroxide (By similarity). Plays a role in regulating transcription as part of the NF-kappa-B p65-p50 complex where it binds to the RELA/p65 subunit, enhances binding of the complex to DNA and promotes transcription of target genes (By similarity). Represses its own translation by binding to its cognate mRNA (By similarity). Binds to and protects TP53/p53 from MDM2-mediated ubiquitination (By similarity). Involved in spindle formation and chromosome movement during mitosis by regulating microtubule polymerization (By similarity). Involved in induction of apoptosis through its role in activation of CASP8 (By similarity). Induces neuronal apoptosis by interacting with the E2F1 transcription factor and acting synergistically with it to up-regulate pro-apoptotic proteins BCL2L11/BIM and HRK/Dp5 (By similarity). Interacts with TRADD following exposure to UV radiation and induces apoptosis by caspase-dependent JNK activation (By similarity).</text>
</comment>
<comment type="catalytic activity">
    <reaction evidence="1">
        <text>2'-deoxyribonucleotide-(2'-deoxyribose 5'-phosphate)-2'-deoxyribonucleotide-DNA = a 3'-end 2'-deoxyribonucleotide-(2,3-dehydro-2,3-deoxyribose 5'-phosphate)-DNA + a 5'-end 5'-phospho-2'-deoxyribonucleoside-DNA + H(+)</text>
        <dbReference type="Rhea" id="RHEA:66592"/>
        <dbReference type="Rhea" id="RHEA-COMP:13180"/>
        <dbReference type="Rhea" id="RHEA-COMP:16897"/>
        <dbReference type="Rhea" id="RHEA-COMP:17067"/>
        <dbReference type="ChEBI" id="CHEBI:15378"/>
        <dbReference type="ChEBI" id="CHEBI:136412"/>
        <dbReference type="ChEBI" id="CHEBI:157695"/>
        <dbReference type="ChEBI" id="CHEBI:167181"/>
        <dbReference type="EC" id="4.2.99.18"/>
    </reaction>
</comment>
<comment type="activity regulation">
    <text evidence="1">Endonuclease activity is inhibited by MgCl2 on apurinic/apyrimidinic DNA but not on UV-irradiated DNA.</text>
</comment>
<comment type="subunit">
    <text evidence="1 2 5 6 7 8 9 10 11 12 13 14 15 16 17 18 19">Component of the 40S small ribosomal subunit (PubMed:23873042, PubMed:25601755, PubMed:26245381, PubMed:27863242, PubMed:29856316, PubMed:30293783, PubMed:31246176, PubMed:31609474, PubMed:31768042, PubMed:32286223, PubMed:33296660, PubMed:35679869, PubMed:35709277, PubMed:35822879, PubMed:36653451). Identified in a IGF2BP1-dependent mRNP granule complex containing untranslated mRNAs (By similarity). Interacts with HNRPD (By similarity). Interacts with PRMT1; the interaction methylates RPS3 (By similarity). Interacts with SUMO1; the interaction sumoylates RPS3 (By similarity). Interacts with UBC9 (By similarity). Interacts with CDK1; the interaction phosphorylates RPS3 (By similarity). Interacts with PRKCD; the interaction phosphorylates RPS3 (By similarity). Interacts with PKB/AKT; the interaction phosphorylates RPS3 (By similarity). Interacts with E2F1; the interaction occurs in the absence of nerve growth factor and increases transcription of pro-apoptotic proteins BCL2L11/BIM and HRK/Dp5 (By similarity). Interacts with the base excision repair proteins APEX1 and OGG1; interaction with OGG1 increases OGG1 N-glycosylase activity (By similarity). Interacts with UNG; the interaction increases the uracil excision activity of UNG1 (By similarity). Interacts with HSP90; the interaction prevents the ubiquitination and proteasome-dependent degradation of RPS3 and is suppressed by increased ROS levels (By similarity). Interacts with TOM70; the interaction promotes translocation of RPS3 to the mitochondrion (By similarity). Interacts (via N-terminus) with RELA (via N-terminus); the interaction enhances the DNA-binding activity of the NF-kappa-B p65-p50 complex (By similarity). Interacts with NFKBIA; the interaction is direct and may bridge the interaction between RPS3 and RELA (By similarity). Interacts with IKKB; the interaction phosphorylates RPS3 and enhances its translocation to the nucleus (By similarity). Interacts (via KH domain) with MDM2 and TP53 (By similarity). Interacts with TRADD (By similarity). Interacts with ASCC3. Identified in a HCV IRES-mediated translation complex, at least composed of EIF3C, IGF2BP1, RPS3 and HCV RNA-replicon. Interacts with CRY1 (By similarity).</text>
</comment>
<comment type="subcellular location">
    <subcellularLocation>
        <location evidence="5 6 7 8 9 10 11 12 13 14 15 16 17 18 19">Cytoplasm</location>
    </subcellularLocation>
    <subcellularLocation>
        <location evidence="1">Nucleus</location>
    </subcellularLocation>
    <subcellularLocation>
        <location evidence="1">Nucleus</location>
        <location evidence="1">Nucleolus</location>
    </subcellularLocation>
    <subcellularLocation>
        <location evidence="1">Mitochondrion inner membrane</location>
        <topology evidence="1">Peripheral membrane protein</topology>
    </subcellularLocation>
    <subcellularLocation>
        <location evidence="1">Cytoplasm</location>
        <location evidence="1">Cytoskeleton</location>
        <location evidence="1">Spindle</location>
    </subcellularLocation>
    <text evidence="1 2">In normal cells, located mainly in the cytoplasm with small amounts in the nucleus but translocates to the nucleus in cells undergoing apoptosis (By similarity). Nuclear translocation is induced by DNA damaging agents such as hydrogen peroxide. Accumulates in the mitochondrion in response to increased ROS levels. Localizes to the spindle during mitosis. Localized in cytoplasmic mRNP granules containing untranslated mRNAs (By similarity).</text>
</comment>
<comment type="PTM">
    <text evidence="1">Methylation by PRMT1 is required for import into the nucleolus and for ribosome assembly.</text>
</comment>
<comment type="PTM">
    <text evidence="1">Sumoylation by SUMO1 enhances protein stability through increased resistance to proteolysis. Sumoylation occurs at one or more of the three consensus sites, Lys-18, Lys-214 and Lys-230.</text>
</comment>
<comment type="PTM">
    <text evidence="1">Phosphorylation at Thr-221 by CDK1 occurs mainly in G2/M phase. Phosphorylation by PRKCD occurs on a non-ribosomal-associated form which results in translocation of RPS3 to the nucleus and enhances its endonuclease activity. Phosphorylated on Ser-209 by IKKB in response to activation of the NF-kappa-B p65-p50 complex which enhances the association of RPS3 with importin-alpha and mediates the nuclear translocation of RPS3. Phosphorylation by MAPK is required for translocation to the nucleus following exposure of cells to DNA damaging agents such as hydrogen peroxide. Phosphorylation by PKB/AKT mediates RPS3 nuclear translocation, enhances RPS3 endonuclease activity and suppresses RPS3-induced neuronal apoptosis.</text>
</comment>
<comment type="PTM">
    <text evidence="1">Ubiquitinated; ubiquitination is prevented by interaction with HSP90 which stabilizes the protein. Monoubiquitinated at Lys-214 by RNF10 and ZNF598 when a ribosome has stalled during translation of poly(A) sequences, leading to preclude synthesis of a long poly-lysine tail and initiate the ribosome quality control (RQC) pathway to degrade the potentially detrimental aberrant nascent polypeptide. Deubiquitinated at Lys-214 by USP10, preventing degradation by the proteasome and promoting 40S ribosome subunit recycling following ribosome dissociation.</text>
</comment>
<comment type="PTM">
    <text evidence="2">Ufmylated by UFL1.</text>
</comment>
<comment type="similarity">
    <text evidence="20">Belongs to the universal ribosomal protein uS3 family.</text>
</comment>
<dbReference type="EC" id="4.2.99.18" evidence="1"/>
<dbReference type="EMBL" id="AAGW02008228">
    <property type="status" value="NOT_ANNOTATED_CDS"/>
    <property type="molecule type" value="Genomic_DNA"/>
</dbReference>
<dbReference type="EMBL" id="AAGW02008229">
    <property type="status" value="NOT_ANNOTATED_CDS"/>
    <property type="molecule type" value="Genomic_DNA"/>
</dbReference>
<dbReference type="RefSeq" id="XP_002708735.1">
    <property type="nucleotide sequence ID" value="XM_002708689.5"/>
</dbReference>
<dbReference type="PDB" id="3JAG">
    <property type="method" value="EM"/>
    <property type="resolution" value="3.65 A"/>
    <property type="chains" value="DD=1-227"/>
</dbReference>
<dbReference type="PDB" id="3JAH">
    <property type="method" value="EM"/>
    <property type="resolution" value="3.45 A"/>
    <property type="chains" value="DD=1-227"/>
</dbReference>
<dbReference type="PDB" id="3JAI">
    <property type="method" value="EM"/>
    <property type="resolution" value="3.65 A"/>
    <property type="chains" value="DD=1-227"/>
</dbReference>
<dbReference type="PDB" id="4D5L">
    <property type="method" value="EM"/>
    <property type="resolution" value="9.00 A"/>
    <property type="chains" value="D=1-243"/>
</dbReference>
<dbReference type="PDB" id="4D61">
    <property type="method" value="EM"/>
    <property type="resolution" value="9.00 A"/>
    <property type="chains" value="D=1-243"/>
</dbReference>
<dbReference type="PDB" id="4KZX">
    <property type="method" value="X-ray"/>
    <property type="resolution" value="7.81 A"/>
    <property type="chains" value="D=1-243"/>
</dbReference>
<dbReference type="PDB" id="4KZY">
    <property type="method" value="X-ray"/>
    <property type="resolution" value="7.01 A"/>
    <property type="chains" value="D=1-243"/>
</dbReference>
<dbReference type="PDB" id="4KZZ">
    <property type="method" value="X-ray"/>
    <property type="resolution" value="7.03 A"/>
    <property type="chains" value="D=1-243"/>
</dbReference>
<dbReference type="PDB" id="5K0Y">
    <property type="method" value="EM"/>
    <property type="resolution" value="5.80 A"/>
    <property type="chains" value="g=1-227"/>
</dbReference>
<dbReference type="PDB" id="5LZS">
    <property type="method" value="EM"/>
    <property type="resolution" value="3.31 A"/>
    <property type="chains" value="DD=1-243"/>
</dbReference>
<dbReference type="PDB" id="5LZT">
    <property type="method" value="EM"/>
    <property type="resolution" value="3.65 A"/>
    <property type="chains" value="DD=1-243"/>
</dbReference>
<dbReference type="PDB" id="5LZU">
    <property type="method" value="EM"/>
    <property type="resolution" value="3.75 A"/>
    <property type="chains" value="DD=1-243"/>
</dbReference>
<dbReference type="PDB" id="5LZV">
    <property type="method" value="EM"/>
    <property type="resolution" value="3.35 A"/>
    <property type="chains" value="DD=1-243"/>
</dbReference>
<dbReference type="PDB" id="5LZW">
    <property type="method" value="EM"/>
    <property type="resolution" value="3.53 A"/>
    <property type="chains" value="DD=1-243"/>
</dbReference>
<dbReference type="PDB" id="5LZX">
    <property type="method" value="EM"/>
    <property type="resolution" value="3.67 A"/>
    <property type="chains" value="DD=1-243"/>
</dbReference>
<dbReference type="PDB" id="5LZY">
    <property type="method" value="EM"/>
    <property type="resolution" value="3.99 A"/>
    <property type="chains" value="DD=1-243"/>
</dbReference>
<dbReference type="PDB" id="5LZZ">
    <property type="method" value="EM"/>
    <property type="resolution" value="3.47 A"/>
    <property type="chains" value="DD=1-243"/>
</dbReference>
<dbReference type="PDB" id="6D90">
    <property type="method" value="EM"/>
    <property type="resolution" value="3.20 A"/>
    <property type="chains" value="EE=1-228"/>
</dbReference>
<dbReference type="PDB" id="6D9J">
    <property type="method" value="EM"/>
    <property type="resolution" value="3.20 A"/>
    <property type="chains" value="EE=1-228"/>
</dbReference>
<dbReference type="PDB" id="6HCF">
    <property type="method" value="EM"/>
    <property type="resolution" value="3.90 A"/>
    <property type="chains" value="E1=1-243"/>
</dbReference>
<dbReference type="PDB" id="6HCJ">
    <property type="method" value="EM"/>
    <property type="resolution" value="3.80 A"/>
    <property type="chains" value="E2=1-243"/>
</dbReference>
<dbReference type="PDB" id="6HCM">
    <property type="method" value="EM"/>
    <property type="resolution" value="6.80 A"/>
    <property type="chains" value="E1=1-243"/>
</dbReference>
<dbReference type="PDB" id="6HCQ">
    <property type="method" value="EM"/>
    <property type="resolution" value="6.50 A"/>
    <property type="chains" value="E2=1-243"/>
</dbReference>
<dbReference type="PDB" id="6P4G">
    <property type="method" value="EM"/>
    <property type="resolution" value="3.10 A"/>
    <property type="chains" value="E=1-228"/>
</dbReference>
<dbReference type="PDB" id="6P4H">
    <property type="method" value="EM"/>
    <property type="resolution" value="3.20 A"/>
    <property type="chains" value="E=1-228"/>
</dbReference>
<dbReference type="PDB" id="6P5I">
    <property type="method" value="EM"/>
    <property type="resolution" value="3.10 A"/>
    <property type="chains" value="E=1-243"/>
</dbReference>
<dbReference type="PDB" id="6P5J">
    <property type="method" value="EM"/>
    <property type="resolution" value="3.10 A"/>
    <property type="chains" value="E=1-243"/>
</dbReference>
<dbReference type="PDB" id="6P5K">
    <property type="method" value="EM"/>
    <property type="resolution" value="3.10 A"/>
    <property type="chains" value="E=1-243"/>
</dbReference>
<dbReference type="PDB" id="6P5N">
    <property type="method" value="EM"/>
    <property type="resolution" value="3.20 A"/>
    <property type="chains" value="E=1-243"/>
</dbReference>
<dbReference type="PDB" id="6R5Q">
    <property type="method" value="EM"/>
    <property type="resolution" value="3.00 A"/>
    <property type="chains" value="w=1-228"/>
</dbReference>
<dbReference type="PDB" id="6R6G">
    <property type="method" value="EM"/>
    <property type="resolution" value="3.70 A"/>
    <property type="chains" value="w=1-228"/>
</dbReference>
<dbReference type="PDB" id="6R6P">
    <property type="method" value="EM"/>
    <property type="resolution" value="3.10 A"/>
    <property type="chains" value="DD=1-228"/>
</dbReference>
<dbReference type="PDB" id="6R7Q">
    <property type="method" value="EM"/>
    <property type="resolution" value="3.90 A"/>
    <property type="chains" value="w=1-228"/>
</dbReference>
<dbReference type="PDB" id="6SGC">
    <property type="method" value="EM"/>
    <property type="resolution" value="2.80 A"/>
    <property type="chains" value="E1=1-243"/>
</dbReference>
<dbReference type="PDB" id="6W2S">
    <property type="method" value="EM"/>
    <property type="resolution" value="3.00 A"/>
    <property type="chains" value="E=1-228"/>
</dbReference>
<dbReference type="PDB" id="6W2T">
    <property type="method" value="EM"/>
    <property type="resolution" value="3.36 A"/>
    <property type="chains" value="E=1-228"/>
</dbReference>
<dbReference type="PDB" id="6YAL">
    <property type="method" value="EM"/>
    <property type="resolution" value="3.00 A"/>
    <property type="chains" value="F=1-243"/>
</dbReference>
<dbReference type="PDB" id="6YAM">
    <property type="method" value="EM"/>
    <property type="resolution" value="3.60 A"/>
    <property type="chains" value="F=1-227"/>
</dbReference>
<dbReference type="PDB" id="6YAN">
    <property type="method" value="EM"/>
    <property type="resolution" value="3.48 A"/>
    <property type="chains" value="F=1-227"/>
</dbReference>
<dbReference type="PDB" id="6ZVK">
    <property type="method" value="EM"/>
    <property type="resolution" value="3.49 A"/>
    <property type="chains" value="Y3=1-227"/>
</dbReference>
<dbReference type="PDB" id="7A01">
    <property type="method" value="EM"/>
    <property type="resolution" value="3.60 A"/>
    <property type="chains" value="Y3=1-227"/>
</dbReference>
<dbReference type="PDB" id="7JQB">
    <property type="method" value="EM"/>
    <property type="resolution" value="2.70 A"/>
    <property type="chains" value="E=1-243"/>
</dbReference>
<dbReference type="PDB" id="7JQC">
    <property type="method" value="EM"/>
    <property type="resolution" value="3.30 A"/>
    <property type="chains" value="E=1-243"/>
</dbReference>
<dbReference type="PDB" id="7MDZ">
    <property type="method" value="EM"/>
    <property type="resolution" value="3.20 A"/>
    <property type="chains" value="DD=1-243"/>
</dbReference>
<dbReference type="PDB" id="7NWG">
    <property type="method" value="EM"/>
    <property type="resolution" value="3.80 A"/>
    <property type="chains" value="E2=1-243"/>
</dbReference>
<dbReference type="PDB" id="7NWH">
    <property type="method" value="EM"/>
    <property type="resolution" value="4.10 A"/>
    <property type="chains" value="DD=1-243"/>
</dbReference>
<dbReference type="PDB" id="7NWI">
    <property type="method" value="EM"/>
    <property type="resolution" value="3.13 A"/>
    <property type="chains" value="DD=1-243"/>
</dbReference>
<dbReference type="PDB" id="7O7Y">
    <property type="method" value="EM"/>
    <property type="resolution" value="2.20 A"/>
    <property type="chains" value="Ac=1-243"/>
</dbReference>
<dbReference type="PDB" id="7O7Z">
    <property type="method" value="EM"/>
    <property type="resolution" value="2.40 A"/>
    <property type="chains" value="Ac=1-243"/>
</dbReference>
<dbReference type="PDB" id="7O80">
    <property type="method" value="EM"/>
    <property type="resolution" value="2.90 A"/>
    <property type="chains" value="Ac=1-243"/>
</dbReference>
<dbReference type="PDB" id="7O81">
    <property type="method" value="EM"/>
    <property type="resolution" value="3.10 A"/>
    <property type="chains" value="Ac=1-243"/>
</dbReference>
<dbReference type="PDB" id="7OYD">
    <property type="method" value="EM"/>
    <property type="resolution" value="2.30 A"/>
    <property type="chains" value="DD=1-243"/>
</dbReference>
<dbReference type="PDB" id="7SYG">
    <property type="method" value="EM"/>
    <property type="resolution" value="4.30 A"/>
    <property type="chains" value="E=1-243"/>
</dbReference>
<dbReference type="PDB" id="7SYH">
    <property type="method" value="EM"/>
    <property type="resolution" value="4.60 A"/>
    <property type="chains" value="E=1-243"/>
</dbReference>
<dbReference type="PDB" id="7SYI">
    <property type="method" value="EM"/>
    <property type="resolution" value="4.50 A"/>
    <property type="chains" value="E=1-228"/>
</dbReference>
<dbReference type="PDB" id="7SYJ">
    <property type="method" value="EM"/>
    <property type="resolution" value="4.80 A"/>
    <property type="chains" value="E=1-228"/>
</dbReference>
<dbReference type="PDB" id="7SYK">
    <property type="method" value="EM"/>
    <property type="resolution" value="4.20 A"/>
    <property type="chains" value="E=1-243"/>
</dbReference>
<dbReference type="PDB" id="7SYL">
    <property type="method" value="EM"/>
    <property type="resolution" value="4.50 A"/>
    <property type="chains" value="E=1-243"/>
</dbReference>
<dbReference type="PDB" id="7SYM">
    <property type="method" value="EM"/>
    <property type="resolution" value="4.80 A"/>
    <property type="chains" value="E=1-243"/>
</dbReference>
<dbReference type="PDB" id="7SYN">
    <property type="method" value="EM"/>
    <property type="resolution" value="4.00 A"/>
    <property type="chains" value="E=1-243"/>
</dbReference>
<dbReference type="PDB" id="7SYO">
    <property type="method" value="EM"/>
    <property type="resolution" value="4.60 A"/>
    <property type="chains" value="E=1-243"/>
</dbReference>
<dbReference type="PDB" id="7SYP">
    <property type="method" value="EM"/>
    <property type="resolution" value="4.00 A"/>
    <property type="chains" value="E=1-243"/>
</dbReference>
<dbReference type="PDB" id="7SYQ">
    <property type="method" value="EM"/>
    <property type="resolution" value="3.80 A"/>
    <property type="chains" value="E=1-243"/>
</dbReference>
<dbReference type="PDB" id="7SYR">
    <property type="method" value="EM"/>
    <property type="resolution" value="3.60 A"/>
    <property type="chains" value="E=1-243"/>
</dbReference>
<dbReference type="PDB" id="7SYS">
    <property type="method" value="EM"/>
    <property type="resolution" value="3.50 A"/>
    <property type="chains" value="E=1-243"/>
</dbReference>
<dbReference type="PDB" id="7SYT">
    <property type="method" value="EM"/>
    <property type="resolution" value="4.40 A"/>
    <property type="chains" value="E=1-243"/>
</dbReference>
<dbReference type="PDB" id="7SYU">
    <property type="method" value="EM"/>
    <property type="resolution" value="4.60 A"/>
    <property type="chains" value="E=1-243"/>
</dbReference>
<dbReference type="PDB" id="7SYV">
    <property type="method" value="EM"/>
    <property type="resolution" value="3.90 A"/>
    <property type="chains" value="E=1-243"/>
</dbReference>
<dbReference type="PDB" id="7SYW">
    <property type="method" value="EM"/>
    <property type="resolution" value="3.70 A"/>
    <property type="chains" value="E=1-243"/>
</dbReference>
<dbReference type="PDB" id="7SYX">
    <property type="method" value="EM"/>
    <property type="resolution" value="3.70 A"/>
    <property type="chains" value="E=1-243"/>
</dbReference>
<dbReference type="PDB" id="7TOQ">
    <property type="method" value="EM"/>
    <property type="resolution" value="3.10 A"/>
    <property type="chains" value="AS03=1-228"/>
</dbReference>
<dbReference type="PDB" id="7TOR">
    <property type="method" value="EM"/>
    <property type="resolution" value="2.90 A"/>
    <property type="chains" value="AS03=1-228"/>
</dbReference>
<dbReference type="PDB" id="7UCJ">
    <property type="method" value="EM"/>
    <property type="resolution" value="3.10 A"/>
    <property type="chains" value="DD=2-228"/>
</dbReference>
<dbReference type="PDB" id="7UCK">
    <property type="method" value="EM"/>
    <property type="resolution" value="2.80 A"/>
    <property type="chains" value="DD=1-228"/>
</dbReference>
<dbReference type="PDB" id="7ZJW">
    <property type="method" value="EM"/>
    <property type="resolution" value="2.80 A"/>
    <property type="chains" value="SO=1-228"/>
</dbReference>
<dbReference type="PDB" id="7ZJX">
    <property type="method" value="EM"/>
    <property type="resolution" value="3.10 A"/>
    <property type="chains" value="SO=1-228"/>
</dbReference>
<dbReference type="PDB" id="8BHF">
    <property type="method" value="EM"/>
    <property type="resolution" value="3.10 A"/>
    <property type="chains" value="E3=1-228"/>
</dbReference>
<dbReference type="PDB" id="8BTK">
    <property type="method" value="EM"/>
    <property type="resolution" value="3.50 A"/>
    <property type="chains" value="Ac=1-243"/>
</dbReference>
<dbReference type="PDB" id="8P03">
    <property type="method" value="EM"/>
    <property type="resolution" value="3.04 A"/>
    <property type="chains" value="F=1-227"/>
</dbReference>
<dbReference type="PDB" id="8P09">
    <property type="method" value="EM"/>
    <property type="resolution" value="3.30 A"/>
    <property type="chains" value="F=1-227"/>
</dbReference>
<dbReference type="PDB" id="8P2K">
    <property type="method" value="EM"/>
    <property type="resolution" value="2.90 A"/>
    <property type="chains" value="Ac=1-243"/>
</dbReference>
<dbReference type="PDB" id="8SCB">
    <property type="method" value="EM"/>
    <property type="resolution" value="2.50 A"/>
    <property type="chains" value="DD=1-243"/>
</dbReference>
<dbReference type="PDB" id="8VFT">
    <property type="method" value="EM"/>
    <property type="resolution" value="3.30 A"/>
    <property type="chains" value="DD=1-243"/>
</dbReference>
<dbReference type="PDB" id="9BDL">
    <property type="method" value="EM"/>
    <property type="resolution" value="2.80 A"/>
    <property type="chains" value="AS03=1-228"/>
</dbReference>
<dbReference type="PDB" id="9BDN">
    <property type="method" value="EM"/>
    <property type="resolution" value="3.10 A"/>
    <property type="chains" value="AS03=1-228"/>
</dbReference>
<dbReference type="PDB" id="9BDP">
    <property type="method" value="EM"/>
    <property type="resolution" value="3.70 A"/>
    <property type="chains" value="AS03=1-228"/>
</dbReference>
<dbReference type="PDB" id="9F1B">
    <property type="method" value="EM"/>
    <property type="resolution" value="3.01 A"/>
    <property type="chains" value="Ac=1-243"/>
</dbReference>
<dbReference type="PDB" id="9F1C">
    <property type="method" value="EM"/>
    <property type="resolution" value="3.78 A"/>
    <property type="chains" value="Ac=1-243"/>
</dbReference>
<dbReference type="PDB" id="9F1D">
    <property type="method" value="EM"/>
    <property type="resolution" value="3.26 A"/>
    <property type="chains" value="Ac=1-243"/>
</dbReference>
<dbReference type="PDBsum" id="3JAG"/>
<dbReference type="PDBsum" id="3JAH"/>
<dbReference type="PDBsum" id="3JAI"/>
<dbReference type="PDBsum" id="4D5L"/>
<dbReference type="PDBsum" id="4D61"/>
<dbReference type="PDBsum" id="4KZX"/>
<dbReference type="PDBsum" id="4KZY"/>
<dbReference type="PDBsum" id="4KZZ"/>
<dbReference type="PDBsum" id="5K0Y"/>
<dbReference type="PDBsum" id="5LZS"/>
<dbReference type="PDBsum" id="5LZT"/>
<dbReference type="PDBsum" id="5LZU"/>
<dbReference type="PDBsum" id="5LZV"/>
<dbReference type="PDBsum" id="5LZW"/>
<dbReference type="PDBsum" id="5LZX"/>
<dbReference type="PDBsum" id="5LZY"/>
<dbReference type="PDBsum" id="5LZZ"/>
<dbReference type="PDBsum" id="6D90"/>
<dbReference type="PDBsum" id="6D9J"/>
<dbReference type="PDBsum" id="6HCF"/>
<dbReference type="PDBsum" id="6HCJ"/>
<dbReference type="PDBsum" id="6HCM"/>
<dbReference type="PDBsum" id="6HCQ"/>
<dbReference type="PDBsum" id="6P4G"/>
<dbReference type="PDBsum" id="6P4H"/>
<dbReference type="PDBsum" id="6P5I"/>
<dbReference type="PDBsum" id="6P5J"/>
<dbReference type="PDBsum" id="6P5K"/>
<dbReference type="PDBsum" id="6P5N"/>
<dbReference type="PDBsum" id="6R5Q"/>
<dbReference type="PDBsum" id="6R6G"/>
<dbReference type="PDBsum" id="6R6P"/>
<dbReference type="PDBsum" id="6R7Q"/>
<dbReference type="PDBsum" id="6SGC"/>
<dbReference type="PDBsum" id="6W2S"/>
<dbReference type="PDBsum" id="6W2T"/>
<dbReference type="PDBsum" id="6YAL"/>
<dbReference type="PDBsum" id="6YAM"/>
<dbReference type="PDBsum" id="6YAN"/>
<dbReference type="PDBsum" id="6ZVK"/>
<dbReference type="PDBsum" id="7A01"/>
<dbReference type="PDBsum" id="7JQB"/>
<dbReference type="PDBsum" id="7JQC"/>
<dbReference type="PDBsum" id="7MDZ"/>
<dbReference type="PDBsum" id="7NWG"/>
<dbReference type="PDBsum" id="7NWH"/>
<dbReference type="PDBsum" id="7NWI"/>
<dbReference type="PDBsum" id="7O7Y"/>
<dbReference type="PDBsum" id="7O7Z"/>
<dbReference type="PDBsum" id="7O80"/>
<dbReference type="PDBsum" id="7O81"/>
<dbReference type="PDBsum" id="7OYD"/>
<dbReference type="PDBsum" id="7SYG"/>
<dbReference type="PDBsum" id="7SYH"/>
<dbReference type="PDBsum" id="7SYI"/>
<dbReference type="PDBsum" id="7SYJ"/>
<dbReference type="PDBsum" id="7SYK"/>
<dbReference type="PDBsum" id="7SYL"/>
<dbReference type="PDBsum" id="7SYM"/>
<dbReference type="PDBsum" id="7SYN"/>
<dbReference type="PDBsum" id="7SYO"/>
<dbReference type="PDBsum" id="7SYP"/>
<dbReference type="PDBsum" id="7SYQ"/>
<dbReference type="PDBsum" id="7SYR"/>
<dbReference type="PDBsum" id="7SYS"/>
<dbReference type="PDBsum" id="7SYT"/>
<dbReference type="PDBsum" id="7SYU"/>
<dbReference type="PDBsum" id="7SYV"/>
<dbReference type="PDBsum" id="7SYW"/>
<dbReference type="PDBsum" id="7SYX"/>
<dbReference type="PDBsum" id="7TOQ"/>
<dbReference type="PDBsum" id="7TOR"/>
<dbReference type="PDBsum" id="7UCJ"/>
<dbReference type="PDBsum" id="7UCK"/>
<dbReference type="PDBsum" id="7ZJW"/>
<dbReference type="PDBsum" id="7ZJX"/>
<dbReference type="PDBsum" id="8BHF"/>
<dbReference type="PDBsum" id="8BTK"/>
<dbReference type="PDBsum" id="8P03"/>
<dbReference type="PDBsum" id="8P09"/>
<dbReference type="PDBsum" id="8P2K"/>
<dbReference type="PDBsum" id="8SCB"/>
<dbReference type="PDBsum" id="8VFT"/>
<dbReference type="PDBsum" id="9BDL"/>
<dbReference type="PDBsum" id="9BDN"/>
<dbReference type="PDBsum" id="9BDP"/>
<dbReference type="PDBsum" id="9F1B"/>
<dbReference type="PDBsum" id="9F1C"/>
<dbReference type="PDBsum" id="9F1D"/>
<dbReference type="EMDB" id="EMD-0099"/>
<dbReference type="EMDB" id="EMD-0100"/>
<dbReference type="EMDB" id="EMD-0192"/>
<dbReference type="EMDB" id="EMD-0194"/>
<dbReference type="EMDB" id="EMD-0195"/>
<dbReference type="EMDB" id="EMD-0197"/>
<dbReference type="EMDB" id="EMD-10181"/>
<dbReference type="EMDB" id="EMD-10760"/>
<dbReference type="EMDB" id="EMD-10761"/>
<dbReference type="EMDB" id="EMD-10762"/>
<dbReference type="EMDB" id="EMD-11459"/>
<dbReference type="EMDB" id="EMD-11590"/>
<dbReference type="EMDB" id="EMD-12631"/>
<dbReference type="EMDB" id="EMD-12632"/>
<dbReference type="EMDB" id="EMD-12633"/>
<dbReference type="EMDB" id="EMD-12756"/>
<dbReference type="EMDB" id="EMD-12757"/>
<dbReference type="EMDB" id="EMD-12758"/>
<dbReference type="EMDB" id="EMD-12759"/>
<dbReference type="EMDB" id="EMD-13114"/>
<dbReference type="EMDB" id="EMD-14751"/>
<dbReference type="EMDB" id="EMD-14752"/>
<dbReference type="EMDB" id="EMD-16052"/>
<dbReference type="EMDB" id="EMD-16232"/>
<dbReference type="EMDB" id="EMD-17329"/>
<dbReference type="EMDB" id="EMD-17330"/>
<dbReference type="EMDB" id="EMD-17367"/>
<dbReference type="EMDB" id="EMD-20248"/>
<dbReference type="EMDB" id="EMD-20249"/>
<dbReference type="EMDB" id="EMD-20255"/>
<dbReference type="EMDB" id="EMD-20256"/>
<dbReference type="EMDB" id="EMD-20257"/>
<dbReference type="EMDB" id="EMD-20258"/>
<dbReference type="EMDB" id="EMD-21529"/>
<dbReference type="EMDB" id="EMD-21530"/>
<dbReference type="EMDB" id="EMD-22432"/>
<dbReference type="EMDB" id="EMD-22433"/>
<dbReference type="EMDB" id="EMD-23785"/>
<dbReference type="EMDB" id="EMD-25527"/>
<dbReference type="EMDB" id="EMD-25528"/>
<dbReference type="EMDB" id="EMD-25529"/>
<dbReference type="EMDB" id="EMD-25530"/>
<dbReference type="EMDB" id="EMD-25531"/>
<dbReference type="EMDB" id="EMD-25532"/>
<dbReference type="EMDB" id="EMD-25533"/>
<dbReference type="EMDB" id="EMD-25534"/>
<dbReference type="EMDB" id="EMD-25535"/>
<dbReference type="EMDB" id="EMD-25536"/>
<dbReference type="EMDB" id="EMD-25537"/>
<dbReference type="EMDB" id="EMD-25538"/>
<dbReference type="EMDB" id="EMD-25539"/>
<dbReference type="EMDB" id="EMD-25540"/>
<dbReference type="EMDB" id="EMD-25541"/>
<dbReference type="EMDB" id="EMD-25542"/>
<dbReference type="EMDB" id="EMD-25543"/>
<dbReference type="EMDB" id="EMD-25544"/>
<dbReference type="EMDB" id="EMD-26035"/>
<dbReference type="EMDB" id="EMD-26036"/>
<dbReference type="EMDB" id="EMD-26444"/>
<dbReference type="EMDB" id="EMD-26445"/>
<dbReference type="EMDB" id="EMD-40344"/>
<dbReference type="EMDB" id="EMD-4130"/>
<dbReference type="EMDB" id="EMD-4131"/>
<dbReference type="EMDB" id="EMD-4132"/>
<dbReference type="EMDB" id="EMD-4133"/>
<dbReference type="EMDB" id="EMD-4134"/>
<dbReference type="EMDB" id="EMD-4135"/>
<dbReference type="EMDB" id="EMD-4136"/>
<dbReference type="EMDB" id="EMD-4137"/>
<dbReference type="EMDB" id="EMD-43189"/>
<dbReference type="EMDB" id="EMD-44461"/>
<dbReference type="EMDB" id="EMD-44463"/>
<dbReference type="EMDB" id="EMD-44464"/>
<dbReference type="EMDB" id="EMD-45307"/>
<dbReference type="EMDB" id="EMD-4729"/>
<dbReference type="EMDB" id="EMD-4735"/>
<dbReference type="EMDB" id="EMD-4737"/>
<dbReference type="EMDB" id="EMD-4745"/>
<dbReference type="EMDB" id="EMD-50124"/>
<dbReference type="EMDB" id="EMD-50125"/>
<dbReference type="EMDB" id="EMD-50126"/>
<dbReference type="EMDB" id="EMD-7834"/>
<dbReference type="EMDB" id="EMD-7836"/>
<dbReference type="EMDB" id="EMD-8190"/>
<dbReference type="SMR" id="G1TNM3"/>
<dbReference type="FunCoup" id="G1TNM3">
    <property type="interactions" value="1695"/>
</dbReference>
<dbReference type="IntAct" id="G1TNM3">
    <property type="interactions" value="2"/>
</dbReference>
<dbReference type="STRING" id="9986.ENSOCUP00000018598"/>
<dbReference type="PaxDb" id="9986-ENSOCUP00000018598"/>
<dbReference type="GeneID" id="100356086"/>
<dbReference type="KEGG" id="ocu:100356086"/>
<dbReference type="CTD" id="6188"/>
<dbReference type="eggNOG" id="KOG3181">
    <property type="taxonomic scope" value="Eukaryota"/>
</dbReference>
<dbReference type="HOGENOM" id="CLU_058591_2_1_1"/>
<dbReference type="InParanoid" id="G1TNM3"/>
<dbReference type="TreeFam" id="TF300901"/>
<dbReference type="Proteomes" id="UP000001811">
    <property type="component" value="Chromosome 1"/>
</dbReference>
<dbReference type="Bgee" id="ENSOCUG00000022412">
    <property type="expression patterns" value="Expressed in uterus and 15 other cell types or tissues"/>
</dbReference>
<dbReference type="GO" id="GO:0022626">
    <property type="term" value="C:cytosolic ribosome"/>
    <property type="evidence" value="ECO:0000314"/>
    <property type="project" value="UniProtKB"/>
</dbReference>
<dbReference type="GO" id="GO:0022627">
    <property type="term" value="C:cytosolic small ribosomal subunit"/>
    <property type="evidence" value="ECO:0007669"/>
    <property type="project" value="TreeGrafter"/>
</dbReference>
<dbReference type="GO" id="GO:0005743">
    <property type="term" value="C:mitochondrial inner membrane"/>
    <property type="evidence" value="ECO:0007669"/>
    <property type="project" value="UniProtKB-SubCell"/>
</dbReference>
<dbReference type="GO" id="GO:0005730">
    <property type="term" value="C:nucleolus"/>
    <property type="evidence" value="ECO:0007669"/>
    <property type="project" value="UniProtKB-SubCell"/>
</dbReference>
<dbReference type="GO" id="GO:0005819">
    <property type="term" value="C:spindle"/>
    <property type="evidence" value="ECO:0007669"/>
    <property type="project" value="UniProtKB-SubCell"/>
</dbReference>
<dbReference type="GO" id="GO:0140078">
    <property type="term" value="F:class I DNA-(apurinic or apyrimidinic site) endonuclease activity"/>
    <property type="evidence" value="ECO:0007669"/>
    <property type="project" value="UniProtKB-EC"/>
</dbReference>
<dbReference type="GO" id="GO:0003677">
    <property type="term" value="F:DNA binding"/>
    <property type="evidence" value="ECO:0007669"/>
    <property type="project" value="UniProtKB-KW"/>
</dbReference>
<dbReference type="GO" id="GO:0003723">
    <property type="term" value="F:RNA binding"/>
    <property type="evidence" value="ECO:0007669"/>
    <property type="project" value="UniProtKB-KW"/>
</dbReference>
<dbReference type="GO" id="GO:0003735">
    <property type="term" value="F:structural constituent of ribosome"/>
    <property type="evidence" value="ECO:0000314"/>
    <property type="project" value="UniProtKB"/>
</dbReference>
<dbReference type="GO" id="GO:0006915">
    <property type="term" value="P:apoptotic process"/>
    <property type="evidence" value="ECO:0007669"/>
    <property type="project" value="UniProtKB-KW"/>
</dbReference>
<dbReference type="GO" id="GO:0051301">
    <property type="term" value="P:cell division"/>
    <property type="evidence" value="ECO:0007669"/>
    <property type="project" value="UniProtKB-KW"/>
</dbReference>
<dbReference type="GO" id="GO:0006281">
    <property type="term" value="P:DNA repair"/>
    <property type="evidence" value="ECO:0007669"/>
    <property type="project" value="UniProtKB-KW"/>
</dbReference>
<dbReference type="GO" id="GO:2001235">
    <property type="term" value="P:positive regulation of apoptotic signaling pathway"/>
    <property type="evidence" value="ECO:0007669"/>
    <property type="project" value="TreeGrafter"/>
</dbReference>
<dbReference type="GO" id="GO:0006417">
    <property type="term" value="P:regulation of translation"/>
    <property type="evidence" value="ECO:0007669"/>
    <property type="project" value="UniProtKB-KW"/>
</dbReference>
<dbReference type="GO" id="GO:0006412">
    <property type="term" value="P:translation"/>
    <property type="evidence" value="ECO:0007669"/>
    <property type="project" value="InterPro"/>
</dbReference>
<dbReference type="CDD" id="cd02413">
    <property type="entry name" value="KH-II_40S_S3"/>
    <property type="match status" value="1"/>
</dbReference>
<dbReference type="FunFam" id="3.30.1140.32:FF:000005">
    <property type="entry name" value="40S ribosomal protein S3"/>
    <property type="match status" value="1"/>
</dbReference>
<dbReference type="FunFam" id="3.30.300.20:FF:000006">
    <property type="entry name" value="40S ribosomal protein S3"/>
    <property type="match status" value="1"/>
</dbReference>
<dbReference type="Gene3D" id="3.30.300.20">
    <property type="match status" value="1"/>
</dbReference>
<dbReference type="Gene3D" id="3.30.1140.32">
    <property type="entry name" value="Ribosomal protein S3, C-terminal domain"/>
    <property type="match status" value="1"/>
</dbReference>
<dbReference type="InterPro" id="IPR015946">
    <property type="entry name" value="KH_dom-like_a/b"/>
</dbReference>
<dbReference type="InterPro" id="IPR004044">
    <property type="entry name" value="KH_dom_type_2"/>
</dbReference>
<dbReference type="InterPro" id="IPR009019">
    <property type="entry name" value="KH_sf_prok-type"/>
</dbReference>
<dbReference type="InterPro" id="IPR036419">
    <property type="entry name" value="Ribosomal_S3_C_sf"/>
</dbReference>
<dbReference type="InterPro" id="IPR001351">
    <property type="entry name" value="Ribosomal_uS3_C"/>
</dbReference>
<dbReference type="InterPro" id="IPR018280">
    <property type="entry name" value="Ribosomal_uS3_CS"/>
</dbReference>
<dbReference type="InterPro" id="IPR005703">
    <property type="entry name" value="Ribosomal_uS3_euk/arc"/>
</dbReference>
<dbReference type="NCBIfam" id="NF003219">
    <property type="entry name" value="PRK04191.1"/>
    <property type="match status" value="1"/>
</dbReference>
<dbReference type="NCBIfam" id="TIGR01008">
    <property type="entry name" value="uS3_euk_arch"/>
    <property type="match status" value="1"/>
</dbReference>
<dbReference type="PANTHER" id="PTHR11760">
    <property type="entry name" value="30S/40S RIBOSOMAL PROTEIN S3"/>
    <property type="match status" value="1"/>
</dbReference>
<dbReference type="PANTHER" id="PTHR11760:SF32">
    <property type="entry name" value="SMALL RIBOSOMAL SUBUNIT PROTEIN US3"/>
    <property type="match status" value="1"/>
</dbReference>
<dbReference type="Pfam" id="PF07650">
    <property type="entry name" value="KH_2"/>
    <property type="match status" value="1"/>
</dbReference>
<dbReference type="Pfam" id="PF00189">
    <property type="entry name" value="Ribosomal_S3_C"/>
    <property type="match status" value="1"/>
</dbReference>
<dbReference type="SUPFAM" id="SSF54814">
    <property type="entry name" value="Prokaryotic type KH domain (KH-domain type II)"/>
    <property type="match status" value="1"/>
</dbReference>
<dbReference type="SUPFAM" id="SSF54821">
    <property type="entry name" value="Ribosomal protein S3 C-terminal domain"/>
    <property type="match status" value="1"/>
</dbReference>
<dbReference type="PROSITE" id="PS50823">
    <property type="entry name" value="KH_TYPE_2"/>
    <property type="match status" value="1"/>
</dbReference>
<dbReference type="PROSITE" id="PS00548">
    <property type="entry name" value="RIBOSOMAL_S3"/>
    <property type="match status" value="1"/>
</dbReference>
<sequence length="243" mass="26674">MAVQISKKRKFVADGIFKAELNEFLTRELAEDGYSGVEVRVTPTRTEIIILATRTQNVLGEKGRRIRELTAVVQKRFGFPEGSVELYAEKVATRGLCAIAQAESLRYKLLGGLAVRRACYGVLRFIMESGAKGCEVVVSGKLRGQRAKSMKFVDGLMIHSGDPVNYYVDTAVRHVLLRQGVLGIKVKIMLPWDPSGKIGPKKPLPDHVSIVEPKDEILPTTPISEQKGGKPEPPAMPQPVPTA</sequence>
<evidence type="ECO:0000250" key="1">
    <source>
        <dbReference type="UniProtKB" id="P23396"/>
    </source>
</evidence>
<evidence type="ECO:0000250" key="2">
    <source>
        <dbReference type="UniProtKB" id="P62908"/>
    </source>
</evidence>
<evidence type="ECO:0000255" key="3">
    <source>
        <dbReference type="PROSITE-ProRule" id="PRU00118"/>
    </source>
</evidence>
<evidence type="ECO:0000256" key="4">
    <source>
        <dbReference type="SAM" id="MobiDB-lite"/>
    </source>
</evidence>
<evidence type="ECO:0000269" key="5">
    <source>
    </source>
</evidence>
<evidence type="ECO:0000269" key="6">
    <source>
    </source>
</evidence>
<evidence type="ECO:0000269" key="7">
    <source>
    </source>
</evidence>
<evidence type="ECO:0000269" key="8">
    <source>
    </source>
</evidence>
<evidence type="ECO:0000269" key="9">
    <source>
    </source>
</evidence>
<evidence type="ECO:0000269" key="10">
    <source>
    </source>
</evidence>
<evidence type="ECO:0000269" key="11">
    <source>
    </source>
</evidence>
<evidence type="ECO:0000269" key="12">
    <source>
    </source>
</evidence>
<evidence type="ECO:0000269" key="13">
    <source>
    </source>
</evidence>
<evidence type="ECO:0000269" key="14">
    <source>
    </source>
</evidence>
<evidence type="ECO:0000269" key="15">
    <source>
    </source>
</evidence>
<evidence type="ECO:0000269" key="16">
    <source>
    </source>
</evidence>
<evidence type="ECO:0000269" key="17">
    <source>
    </source>
</evidence>
<evidence type="ECO:0000269" key="18">
    <source>
    </source>
</evidence>
<evidence type="ECO:0000269" key="19">
    <source>
    </source>
</evidence>
<evidence type="ECO:0000305" key="20"/>
<evidence type="ECO:0007744" key="21">
    <source>
        <dbReference type="PDB" id="3JAG"/>
    </source>
</evidence>
<evidence type="ECO:0007744" key="22">
    <source>
        <dbReference type="PDB" id="3JAH"/>
    </source>
</evidence>
<evidence type="ECO:0007744" key="23">
    <source>
        <dbReference type="PDB" id="4D5L"/>
    </source>
</evidence>
<evidence type="ECO:0007744" key="24">
    <source>
        <dbReference type="PDB" id="4D61"/>
    </source>
</evidence>
<evidence type="ECO:0007744" key="25">
    <source>
        <dbReference type="PDB" id="4KZX"/>
    </source>
</evidence>
<evidence type="ECO:0007744" key="26">
    <source>
        <dbReference type="PDB" id="4KZY"/>
    </source>
</evidence>
<evidence type="ECO:0007744" key="27">
    <source>
        <dbReference type="PDB" id="5LZS"/>
    </source>
</evidence>
<evidence type="ECO:0007744" key="28">
    <source>
        <dbReference type="PDB" id="5LZT"/>
    </source>
</evidence>
<evidence type="ECO:0007744" key="29">
    <source>
        <dbReference type="PDB" id="6D90"/>
    </source>
</evidence>
<evidence type="ECO:0007744" key="30">
    <source>
        <dbReference type="PDB" id="6D9J"/>
    </source>
</evidence>
<evidence type="ECO:0007744" key="31">
    <source>
        <dbReference type="PDB" id="6HCF"/>
    </source>
</evidence>
<evidence type="ECO:0007744" key="32">
    <source>
        <dbReference type="PDB" id="6HCJ"/>
    </source>
</evidence>
<evidence type="ECO:0007744" key="33">
    <source>
        <dbReference type="PDB" id="6P4G"/>
    </source>
</evidence>
<evidence type="ECO:0007744" key="34">
    <source>
        <dbReference type="PDB" id="6P4H"/>
    </source>
</evidence>
<evidence type="ECO:0007744" key="35">
    <source>
        <dbReference type="PDB" id="6R5Q"/>
    </source>
</evidence>
<evidence type="ECO:0007744" key="36">
    <source>
        <dbReference type="PDB" id="6R6G"/>
    </source>
</evidence>
<evidence type="ECO:0007744" key="37">
    <source>
        <dbReference type="PDB" id="6SGC"/>
    </source>
</evidence>
<evidence type="ECO:0007744" key="38">
    <source>
        <dbReference type="PDB" id="6W2S"/>
    </source>
</evidence>
<evidence type="ECO:0007744" key="39">
    <source>
        <dbReference type="PDB" id="6W2T"/>
    </source>
</evidence>
<evidence type="ECO:0007744" key="40">
    <source>
        <dbReference type="PDB" id="6ZVK"/>
    </source>
</evidence>
<evidence type="ECO:0007744" key="41">
    <source>
        <dbReference type="PDB" id="7A01"/>
    </source>
</evidence>
<evidence type="ECO:0007744" key="42">
    <source>
        <dbReference type="PDB" id="7OYD"/>
    </source>
</evidence>
<evidence type="ECO:0007744" key="43">
    <source>
        <dbReference type="PDB" id="7SYI"/>
    </source>
</evidence>
<evidence type="ECO:0007744" key="44">
    <source>
        <dbReference type="PDB" id="7SYJ"/>
    </source>
</evidence>
<evidence type="ECO:0007744" key="45">
    <source>
        <dbReference type="PDB" id="7UCJ"/>
    </source>
</evidence>
<evidence type="ECO:0007744" key="46">
    <source>
        <dbReference type="PDB" id="7UCK"/>
    </source>
</evidence>
<evidence type="ECO:0007744" key="47">
    <source>
        <dbReference type="PDB" id="7ZJW"/>
    </source>
</evidence>
<evidence type="ECO:0007744" key="48">
    <source>
        <dbReference type="PDB" id="7ZJX"/>
    </source>
</evidence>
<evidence type="ECO:0007829" key="49">
    <source>
        <dbReference type="PDB" id="6YAL"/>
    </source>
</evidence>
<evidence type="ECO:0007829" key="50">
    <source>
        <dbReference type="PDB" id="7JQB"/>
    </source>
</evidence>
<organism>
    <name type="scientific">Oryctolagus cuniculus</name>
    <name type="common">Rabbit</name>
    <dbReference type="NCBI Taxonomy" id="9986"/>
    <lineage>
        <taxon>Eukaryota</taxon>
        <taxon>Metazoa</taxon>
        <taxon>Chordata</taxon>
        <taxon>Craniata</taxon>
        <taxon>Vertebrata</taxon>
        <taxon>Euteleostomi</taxon>
        <taxon>Mammalia</taxon>
        <taxon>Eutheria</taxon>
        <taxon>Euarchontoglires</taxon>
        <taxon>Glires</taxon>
        <taxon>Lagomorpha</taxon>
        <taxon>Leporidae</taxon>
        <taxon>Oryctolagus</taxon>
    </lineage>
</organism>
<reference key="1">
    <citation type="journal article" date="2011" name="Nature">
        <title>A high-resolution map of human evolutionary constraint using 29 mammals.</title>
        <authorList>
            <person name="Lindblad-Toh K."/>
            <person name="Garber M."/>
            <person name="Zuk O."/>
            <person name="Lin M.F."/>
            <person name="Parker B.J."/>
            <person name="Washietl S."/>
            <person name="Kheradpour P."/>
            <person name="Ernst J."/>
            <person name="Jordan G."/>
            <person name="Mauceli E."/>
            <person name="Ward L.D."/>
            <person name="Lowe C.B."/>
            <person name="Holloway A.K."/>
            <person name="Clamp M."/>
            <person name="Gnerre S."/>
            <person name="Alfoldi J."/>
            <person name="Beal K."/>
            <person name="Chang J."/>
            <person name="Clawson H."/>
            <person name="Cuff J."/>
            <person name="Di Palma F."/>
            <person name="Fitzgerald S."/>
            <person name="Flicek P."/>
            <person name="Guttman M."/>
            <person name="Hubisz M.J."/>
            <person name="Jaffe D.B."/>
            <person name="Jungreis I."/>
            <person name="Kent W.J."/>
            <person name="Kostka D."/>
            <person name="Lara M."/>
            <person name="Martins A.L."/>
            <person name="Massingham T."/>
            <person name="Moltke I."/>
            <person name="Raney B.J."/>
            <person name="Rasmussen M.D."/>
            <person name="Robinson J."/>
            <person name="Stark A."/>
            <person name="Vilella A.J."/>
            <person name="Wen J."/>
            <person name="Xie X."/>
            <person name="Zody M.C."/>
            <person name="Baldwin J."/>
            <person name="Bloom T."/>
            <person name="Chin C.W."/>
            <person name="Heiman D."/>
            <person name="Nicol R."/>
            <person name="Nusbaum C."/>
            <person name="Young S."/>
            <person name="Wilkinson J."/>
            <person name="Worley K.C."/>
            <person name="Kovar C.L."/>
            <person name="Muzny D.M."/>
            <person name="Gibbs R.A."/>
            <person name="Cree A."/>
            <person name="Dihn H.H."/>
            <person name="Fowler G."/>
            <person name="Jhangiani S."/>
            <person name="Joshi V."/>
            <person name="Lee S."/>
            <person name="Lewis L.R."/>
            <person name="Nazareth L.V."/>
            <person name="Okwuonu G."/>
            <person name="Santibanez J."/>
            <person name="Warren W.C."/>
            <person name="Mardis E.R."/>
            <person name="Weinstock G.M."/>
            <person name="Wilson R.K."/>
            <person name="Delehaunty K."/>
            <person name="Dooling D."/>
            <person name="Fronik C."/>
            <person name="Fulton L."/>
            <person name="Fulton B."/>
            <person name="Graves T."/>
            <person name="Minx P."/>
            <person name="Sodergren E."/>
            <person name="Birney E."/>
            <person name="Margulies E.H."/>
            <person name="Herrero J."/>
            <person name="Green E.D."/>
            <person name="Haussler D."/>
            <person name="Siepel A."/>
            <person name="Goldman N."/>
            <person name="Pollard K.S."/>
            <person name="Pedersen J.S."/>
            <person name="Lander E.S."/>
            <person name="Kellis M."/>
        </authorList>
    </citation>
    <scope>NUCLEOTIDE SEQUENCE [LARGE SCALE GENOMIC DNA]</scope>
    <source>
        <strain>Thorbecke</strain>
    </source>
</reference>
<reference evidence="25 26" key="2">
    <citation type="journal article" date="2013" name="Nature">
        <title>The initiation of mammalian protein synthesis and mRNA scanning mechanism.</title>
        <authorList>
            <person name="Lomakin I.B."/>
            <person name="Steitz T.A."/>
        </authorList>
    </citation>
    <scope>X-RAY CRYSTALLOGRAPHY (7.01 ANGSTROMS) OF 40S RIBOSOME</scope>
    <scope>FUNCTION</scope>
    <scope>SUBUNIT</scope>
    <scope>SUBCELLULAR LOCATION</scope>
</reference>
<reference evidence="23 24" key="3">
    <citation type="journal article" date="2015" name="Mol. Cell">
        <title>Cryo-EM of ribosomal 80S complexes with termination factors reveals the translocated cricket paralysis virus IRES.</title>
        <authorList>
            <person name="Muhs M."/>
            <person name="Hilal T."/>
            <person name="Mielke T."/>
            <person name="Skabkin M.A."/>
            <person name="Sanbonmatsu K.Y."/>
            <person name="Pestova T.V."/>
            <person name="Spahn C.M."/>
        </authorList>
    </citation>
    <scope>STRUCTURE BY ELECTRON MICROSCOPY (9.00 ANGSTROMS) OF RIBOSOME</scope>
    <scope>FUNCTION</scope>
    <scope>SUBUNIT</scope>
    <scope>SUBCELLULAR LOCATION</scope>
</reference>
<reference evidence="21 22" key="4">
    <citation type="journal article" date="2015" name="Nature">
        <title>Structural basis for stop codon recognition in eukaryotes.</title>
        <authorList>
            <person name="Brown A."/>
            <person name="Shao S."/>
            <person name="Murray J."/>
            <person name="Hegde R.S."/>
            <person name="Ramakrishnan V."/>
        </authorList>
    </citation>
    <scope>STRUCTURE BY ELECTRON MICROSCOPY (3.45 ANGSTROMS) OF 1-227 OF RIBOSOME</scope>
    <scope>FUNCTION</scope>
    <scope>SUBCELLULAR LOCATION</scope>
    <scope>SUBUNIT</scope>
</reference>
<reference evidence="27 28" key="5">
    <citation type="journal article" date="2016" name="Cell">
        <title>Decoding mammalian ribosome-mRNA states by translational GTPase complexes.</title>
        <authorList>
            <person name="Shao S."/>
            <person name="Murray J."/>
            <person name="Brown A."/>
            <person name="Taunton J."/>
            <person name="Ramakrishnan V."/>
            <person name="Hegde R.S."/>
        </authorList>
    </citation>
    <scope>STRUCTURE BY ELECTRON MICROSCOPY (3.31 ANGSTROMS) OF RIBOSOME</scope>
    <scope>FUNCTION</scope>
    <scope>SUBCELLULAR LOCATION</scope>
    <scope>SUBUNIT</scope>
</reference>
<reference evidence="29 30" key="6">
    <citation type="journal article" date="2018" name="Elife">
        <title>Dual tRNA mimicry in the Cricket paralysis virus IRES uncovers an unexpected similarity with the Hepatitis C Virus IRES.</title>
        <authorList>
            <person name="Pisareva V.P."/>
            <person name="Pisarev A.V."/>
            <person name="Fernandez I.S."/>
        </authorList>
    </citation>
    <scope>STRUCTURE BY ELECTRON MICROSCOPY (3.20 ANGSTROMS) OF RIBOSOME</scope>
    <scope>SUBCELLULAR LOCATION</scope>
    <scope>SUBUNIT</scope>
</reference>
<reference evidence="31 32" key="7">
    <citation type="journal article" date="2018" name="Mol. Cell">
        <title>ZNF598 is a quality control sensor of collided ribosomes.</title>
        <authorList>
            <person name="Juszkiewicz S."/>
            <person name="Chandrasekaran V."/>
            <person name="Lin Z."/>
            <person name="Kraatz S."/>
            <person name="Ramakrishnan V."/>
            <person name="Hegde R.S."/>
        </authorList>
    </citation>
    <scope>STRUCTURE BY ELECTRON MICROSCOPY (3.80 ANGSTROMS) OF RIBOSOME</scope>
    <scope>SUBCELLULAR LOCATION</scope>
    <scope>SUBUNIT</scope>
</reference>
<reference evidence="35 36" key="8">
    <citation type="journal article" date="2019" name="Elife">
        <title>Structural and mutational analysis of the ribosome-arresting human XBP1u.</title>
        <authorList>
            <person name="Shanmuganathan V."/>
            <person name="Schiller N."/>
            <person name="Magoulopoulou A."/>
            <person name="Cheng J."/>
            <person name="Braunger K."/>
            <person name="Cymer F."/>
            <person name="Berninghausen O."/>
            <person name="Beatrix B."/>
            <person name="Kohno K."/>
            <person name="von Heijne G."/>
            <person name="Beckmann R."/>
        </authorList>
    </citation>
    <scope>STRUCTURE BY ELECTRON MICROSCOPY (3.00 ANGSTROMS) OF 1-228 OF RIBOSOME</scope>
    <scope>SUBCELLULAR LOCATION</scope>
    <scope>SUBUNIT</scope>
</reference>
<reference evidence="33 34" key="9">
    <citation type="journal article" date="2019" name="EMBO J.">
        <title>The Israeli acute paralysis virus IRES captures host ribosomes by mimicking a ribosomal state with hybrid tRNAs.</title>
        <authorList>
            <person name="Acosta-Reyes F."/>
            <person name="Neupane R."/>
            <person name="Frank J."/>
            <person name="Fernandez I.S."/>
        </authorList>
    </citation>
    <scope>STRUCTURE BY ELECTRON MICROSCOPY (3.10 ANGSTROMS) OF RIBOSOME</scope>
    <scope>SUBUNIT</scope>
    <scope>SUBCELLULAR LOCATION</scope>
</reference>
<reference evidence="37" key="10">
    <citation type="journal article" date="2019" name="Nat. Struct. Mol. Biol.">
        <title>Mechanism of ribosome stalling during translation of a poly(A) tail.</title>
        <authorList>
            <person name="Chandrasekaran V."/>
            <person name="Juszkiewicz S."/>
            <person name="Choi J."/>
            <person name="Puglisi J.D."/>
            <person name="Brown A."/>
            <person name="Shao S."/>
            <person name="Ramakrishnan V."/>
            <person name="Hegde R.S."/>
        </authorList>
    </citation>
    <scope>STRUCTURE BY ELECTRON MICROSCOPY (2.80 ANGSTROMS) OF RIBOSOME</scope>
    <scope>SUBCELLULAR LOCATION</scope>
    <scope>SUBUNIT</scope>
</reference>
<reference evidence="40 41" key="11">
    <citation type="journal article" date="2020" name="Cell Rep.">
        <title>The Halastavi arva virus intergenic region IRES promotes translation by the simplest possible initiation mechanism.</title>
        <authorList>
            <person name="Abaeva I.S."/>
            <person name="Vicens Q."/>
            <person name="Bochler A."/>
            <person name="Soufari H."/>
            <person name="Simonetti A."/>
            <person name="Pestova T.V."/>
            <person name="Hashem Y."/>
            <person name="Hellen C.U.T."/>
        </authorList>
    </citation>
    <scope>STRUCTURE BY ELECTRON MICROSCOPY (3.49 ANGSTROMS) OF RIBOSOME</scope>
    <scope>SUBCELLULAR LOCATION</scope>
    <scope>SUBUNIT</scope>
</reference>
<reference evidence="38 39" key="12">
    <citation type="journal article" date="2020" name="Elife">
        <title>A complex IRES at the 5'-UTR of a viral mRNA assembles a functional 48S complex via an uAUG intermediate.</title>
        <authorList>
            <person name="Neupane R."/>
            <person name="Pisareva V.P."/>
            <person name="Rodriguez C.F."/>
            <person name="Pisarev A.V."/>
            <person name="Fernandez I.S."/>
        </authorList>
    </citation>
    <scope>STRUCTURE BY ELECTRON MICROSCOPY (3.00 ANGSTROMS) OF RIBOSOME</scope>
    <scope>SUBUNIT</scope>
    <scope>SUBCELLULAR LOCATION</scope>
</reference>
<reference evidence="43 44" key="13">
    <citation type="journal article" date="2022" name="EMBO J.">
        <title>Molecular architecture of 40S translation initiation complexes on the hepatitis C virus IRES.</title>
        <authorList>
            <person name="Brown Z.P."/>
            <person name="Abaeva I.S."/>
            <person name="De S."/>
            <person name="Hellen C.U.T."/>
            <person name="Pestova T.V."/>
            <person name="Frank J."/>
        </authorList>
    </citation>
    <scope>STRUCTURE BY ELECTRON MICROSCOPY (3.50 ANGSTROMS) OF RIBOSOME</scope>
    <scope>SUBCELLULAR LOCATION</scope>
    <scope>SUBUNIT</scope>
</reference>
<reference evidence="45 46" key="14">
    <citation type="journal article" date="2022" name="Mol. Cell">
        <title>Direct epitranscriptomic regulation of mammalian translation initiation through N4-acetylcytidine.</title>
        <authorList>
            <person name="Arango D."/>
            <person name="Sturgill D."/>
            <person name="Yang R."/>
            <person name="Kanai T."/>
            <person name="Bauer P."/>
            <person name="Roy J."/>
            <person name="Wang Z."/>
            <person name="Hosogane M."/>
            <person name="Schiffers S."/>
            <person name="Oberdoerffer S."/>
        </authorList>
    </citation>
    <scope>STRUCTURE BY ELECTRON MICROSCOPY (2.80 ANGSTROMS) OF RIBOSOME</scope>
    <scope>SUBCELLULAR LOCATION</scope>
    <scope>SUBUNIT</scope>
</reference>
<reference evidence="47 48" key="15">
    <citation type="journal article" date="2022" name="Science">
        <title>Structure of the mammalian ribosome as it decodes the selenocysteine UGA codon.</title>
        <authorList>
            <person name="Hilal T."/>
            <person name="Killam B.Y."/>
            <person name="Grozdanovic M."/>
            <person name="Dobosz-Bartoszek M."/>
            <person name="Loerke J."/>
            <person name="Buerger J."/>
            <person name="Mielke T."/>
            <person name="Copeland P.R."/>
            <person name="Simonovic M."/>
            <person name="Spahn C.M.T."/>
        </authorList>
    </citation>
    <scope>STRUCTURE BY ELECTRON MICROSCOPY (2.80 ANGSTROMS) OF RIBOSOME</scope>
    <scope>SUBCELLULAR LOCATION</scope>
    <scope>SUBUNIT</scope>
</reference>
<reference evidence="42" key="16">
    <citation type="journal article" date="2023" name="Nature">
        <title>A molecular network of conserved factors keeps ribosomes dormant in the egg.</title>
        <authorList>
            <person name="Leesch F."/>
            <person name="Lorenzo-Orts L."/>
            <person name="Pribitzer C."/>
            <person name="Grishkovskaya I."/>
            <person name="Roehsner J."/>
            <person name="Chugunova A."/>
            <person name="Matzinger M."/>
            <person name="Roitinger E."/>
            <person name="Belacic K."/>
            <person name="Kandolf S."/>
            <person name="Lin T.Y."/>
            <person name="Mechtler K."/>
            <person name="Meinhart A."/>
            <person name="Haselbach D."/>
            <person name="Pauli A."/>
        </authorList>
    </citation>
    <scope>STRUCTURE BY ELECTRON MICROSCOPY (2.30 ANGSTROMS) OF RIBOSOME</scope>
    <scope>SUBCELLULAR LOCATION</scope>
    <scope>SUBUNIT</scope>
</reference>